<organism>
    <name type="scientific">Shigella dysenteriae serotype 1 (strain Sd197)</name>
    <dbReference type="NCBI Taxonomy" id="300267"/>
    <lineage>
        <taxon>Bacteria</taxon>
        <taxon>Pseudomonadati</taxon>
        <taxon>Pseudomonadota</taxon>
        <taxon>Gammaproteobacteria</taxon>
        <taxon>Enterobacterales</taxon>
        <taxon>Enterobacteriaceae</taxon>
        <taxon>Shigella</taxon>
    </lineage>
</organism>
<keyword id="KW-0997">Cell inner membrane</keyword>
<keyword id="KW-1003">Cell membrane</keyword>
<keyword id="KW-0460">Magnesium</keyword>
<keyword id="KW-0472">Membrane</keyword>
<keyword id="KW-1185">Reference proteome</keyword>
<keyword id="KW-0808">Transferase</keyword>
<keyword id="KW-0812">Transmembrane</keyword>
<keyword id="KW-1133">Transmembrane helix</keyword>
<keyword id="KW-0831">Ubiquinone biosynthesis</keyword>
<feature type="chain" id="PRO_0000262843" description="4-hydroxybenzoate octaprenyltransferase">
    <location>
        <begin position="1"/>
        <end position="290"/>
    </location>
</feature>
<feature type="transmembrane region" description="Helical" evidence="1">
    <location>
        <begin position="23"/>
        <end position="43"/>
    </location>
</feature>
<feature type="transmembrane region" description="Helical" evidence="1">
    <location>
        <begin position="46"/>
        <end position="66"/>
    </location>
</feature>
<feature type="transmembrane region" description="Helical" evidence="1">
    <location>
        <begin position="99"/>
        <end position="119"/>
    </location>
</feature>
<feature type="transmembrane region" description="Helical" evidence="1">
    <location>
        <begin position="141"/>
        <end position="161"/>
    </location>
</feature>
<feature type="transmembrane region" description="Helical" evidence="1">
    <location>
        <begin position="163"/>
        <end position="183"/>
    </location>
</feature>
<feature type="transmembrane region" description="Helical" evidence="1">
    <location>
        <begin position="213"/>
        <end position="233"/>
    </location>
</feature>
<feature type="transmembrane region" description="Helical" evidence="1">
    <location>
        <begin position="234"/>
        <end position="254"/>
    </location>
</feature>
<feature type="transmembrane region" description="Helical" evidence="1">
    <location>
        <begin position="268"/>
        <end position="288"/>
    </location>
</feature>
<comment type="function">
    <text evidence="1">Catalyzes the prenylation of para-hydroxybenzoate (PHB) with an all-trans polyprenyl group. Mediates the second step in the final reaction sequence of ubiquinone-8 (UQ-8) biosynthesis, which is the condensation of the polyisoprenoid side chain with PHB, generating the first membrane-bound Q intermediate 3-octaprenyl-4-hydroxybenzoate.</text>
</comment>
<comment type="catalytic activity">
    <reaction evidence="1">
        <text>all-trans-octaprenyl diphosphate + 4-hydroxybenzoate = 4-hydroxy-3-(all-trans-octaprenyl)benzoate + diphosphate</text>
        <dbReference type="Rhea" id="RHEA:27782"/>
        <dbReference type="ChEBI" id="CHEBI:1617"/>
        <dbReference type="ChEBI" id="CHEBI:17879"/>
        <dbReference type="ChEBI" id="CHEBI:33019"/>
        <dbReference type="ChEBI" id="CHEBI:57711"/>
        <dbReference type="EC" id="2.5.1.39"/>
    </reaction>
</comment>
<comment type="cofactor">
    <cofactor evidence="1">
        <name>Mg(2+)</name>
        <dbReference type="ChEBI" id="CHEBI:18420"/>
    </cofactor>
</comment>
<comment type="pathway">
    <text evidence="1">Cofactor biosynthesis; ubiquinone biosynthesis.</text>
</comment>
<comment type="subcellular location">
    <subcellularLocation>
        <location evidence="1">Cell inner membrane</location>
        <topology evidence="1">Multi-pass membrane protein</topology>
    </subcellularLocation>
</comment>
<comment type="similarity">
    <text evidence="1">Belongs to the UbiA prenyltransferase family.</text>
</comment>
<reference key="1">
    <citation type="journal article" date="2005" name="Nucleic Acids Res.">
        <title>Genome dynamics and diversity of Shigella species, the etiologic agents of bacillary dysentery.</title>
        <authorList>
            <person name="Yang F."/>
            <person name="Yang J."/>
            <person name="Zhang X."/>
            <person name="Chen L."/>
            <person name="Jiang Y."/>
            <person name="Yan Y."/>
            <person name="Tang X."/>
            <person name="Wang J."/>
            <person name="Xiong Z."/>
            <person name="Dong J."/>
            <person name="Xue Y."/>
            <person name="Zhu Y."/>
            <person name="Xu X."/>
            <person name="Sun L."/>
            <person name="Chen S."/>
            <person name="Nie H."/>
            <person name="Peng J."/>
            <person name="Xu J."/>
            <person name="Wang Y."/>
            <person name="Yuan Z."/>
            <person name="Wen Y."/>
            <person name="Yao Z."/>
            <person name="Shen Y."/>
            <person name="Qiang B."/>
            <person name="Hou Y."/>
            <person name="Yu J."/>
            <person name="Jin Q."/>
        </authorList>
    </citation>
    <scope>NUCLEOTIDE SEQUENCE [LARGE SCALE GENOMIC DNA]</scope>
    <source>
        <strain>Sd197</strain>
    </source>
</reference>
<accession>Q327U7</accession>
<name>UBIA_SHIDS</name>
<protein>
    <recommendedName>
        <fullName evidence="1">4-hydroxybenzoate octaprenyltransferase</fullName>
        <ecNumber evidence="1">2.5.1.39</ecNumber>
    </recommendedName>
    <alternativeName>
        <fullName evidence="1">4-HB polyprenyltransferase</fullName>
    </alternativeName>
</protein>
<dbReference type="EC" id="2.5.1.39" evidence="1"/>
<dbReference type="EMBL" id="CP000034">
    <property type="protein sequence ID" value="ABB64408.1"/>
    <property type="molecule type" value="Genomic_DNA"/>
</dbReference>
<dbReference type="RefSeq" id="WP_000455227.1">
    <property type="nucleotide sequence ID" value="NC_007606.1"/>
</dbReference>
<dbReference type="RefSeq" id="YP_405899.1">
    <property type="nucleotide sequence ID" value="NC_007606.1"/>
</dbReference>
<dbReference type="SMR" id="Q327U7"/>
<dbReference type="STRING" id="300267.SDY_4534"/>
<dbReference type="EnsemblBacteria" id="ABB64408">
    <property type="protein sequence ID" value="ABB64408"/>
    <property type="gene ID" value="SDY_4534"/>
</dbReference>
<dbReference type="GeneID" id="93777791"/>
<dbReference type="KEGG" id="sdy:SDY_4534"/>
<dbReference type="PATRIC" id="fig|300267.13.peg.5358"/>
<dbReference type="HOGENOM" id="CLU_034879_1_0_6"/>
<dbReference type="UniPathway" id="UPA00232"/>
<dbReference type="Proteomes" id="UP000002716">
    <property type="component" value="Chromosome"/>
</dbReference>
<dbReference type="GO" id="GO:0005886">
    <property type="term" value="C:plasma membrane"/>
    <property type="evidence" value="ECO:0007669"/>
    <property type="project" value="UniProtKB-SubCell"/>
</dbReference>
<dbReference type="GO" id="GO:0008412">
    <property type="term" value="F:4-hydroxybenzoate polyprenyltransferase activity"/>
    <property type="evidence" value="ECO:0007669"/>
    <property type="project" value="UniProtKB-UniRule"/>
</dbReference>
<dbReference type="GO" id="GO:0006744">
    <property type="term" value="P:ubiquinone biosynthetic process"/>
    <property type="evidence" value="ECO:0007669"/>
    <property type="project" value="UniProtKB-UniRule"/>
</dbReference>
<dbReference type="CDD" id="cd13959">
    <property type="entry name" value="PT_UbiA_COQ2"/>
    <property type="match status" value="1"/>
</dbReference>
<dbReference type="FunFam" id="1.10.357.140:FF:000002">
    <property type="entry name" value="4-hydroxybenzoate octaprenyltransferase"/>
    <property type="match status" value="1"/>
</dbReference>
<dbReference type="FunFam" id="1.20.120.1780:FF:000001">
    <property type="entry name" value="4-hydroxybenzoate octaprenyltransferase"/>
    <property type="match status" value="1"/>
</dbReference>
<dbReference type="Gene3D" id="1.10.357.140">
    <property type="entry name" value="UbiA prenyltransferase"/>
    <property type="match status" value="1"/>
</dbReference>
<dbReference type="Gene3D" id="1.20.120.1780">
    <property type="entry name" value="UbiA prenyltransferase"/>
    <property type="match status" value="1"/>
</dbReference>
<dbReference type="HAMAP" id="MF_01635">
    <property type="entry name" value="UbiA"/>
    <property type="match status" value="1"/>
</dbReference>
<dbReference type="InterPro" id="IPR006370">
    <property type="entry name" value="HB_polyprenyltransferase-like"/>
</dbReference>
<dbReference type="InterPro" id="IPR039653">
    <property type="entry name" value="Prenyltransferase"/>
</dbReference>
<dbReference type="InterPro" id="IPR000537">
    <property type="entry name" value="UbiA_prenyltransferase"/>
</dbReference>
<dbReference type="InterPro" id="IPR030470">
    <property type="entry name" value="UbiA_prenylTrfase_CS"/>
</dbReference>
<dbReference type="InterPro" id="IPR044878">
    <property type="entry name" value="UbiA_sf"/>
</dbReference>
<dbReference type="NCBIfam" id="TIGR01474">
    <property type="entry name" value="ubiA_proteo"/>
    <property type="match status" value="1"/>
</dbReference>
<dbReference type="PANTHER" id="PTHR11048:SF28">
    <property type="entry name" value="4-HYDROXYBENZOATE POLYPRENYLTRANSFERASE, MITOCHONDRIAL"/>
    <property type="match status" value="1"/>
</dbReference>
<dbReference type="PANTHER" id="PTHR11048">
    <property type="entry name" value="PRENYLTRANSFERASES"/>
    <property type="match status" value="1"/>
</dbReference>
<dbReference type="Pfam" id="PF01040">
    <property type="entry name" value="UbiA"/>
    <property type="match status" value="1"/>
</dbReference>
<dbReference type="PROSITE" id="PS00943">
    <property type="entry name" value="UBIA"/>
    <property type="match status" value="1"/>
</dbReference>
<gene>
    <name evidence="1" type="primary">ubiA</name>
    <name type="ordered locus">SDY_4534</name>
</gene>
<evidence type="ECO:0000255" key="1">
    <source>
        <dbReference type="HAMAP-Rule" id="MF_01635"/>
    </source>
</evidence>
<sequence length="290" mass="32512">MEWSLTQNKLLAFHRLMRTDKPIGALLLLWPTLWALWVATPGVPQLWILAVFVAGVWLMRAAGCVVNDYADRKFDGHVKRTANRPLPSGAVTEKEARALFVVLVLISFLLVLTLNTMTILLSIAALALAWVYPFMKRYTHLPQVVLGAAFGWSIPMAFAAVSESVPLSCWLMFLANILWAVAYDTQYAMVDRDDDVKIGIKSTAILFGQYDKLIIGILQIGVLALMAIIGELNGLGWGYYWSILVAGALFVYQQKLIANREREACFKAFMNNNYVGLVLFLGLAMSYWHF</sequence>
<proteinExistence type="inferred from homology"/>